<name>GLMM_FRAT1</name>
<dbReference type="EC" id="5.4.2.10" evidence="1"/>
<dbReference type="EMBL" id="AM286280">
    <property type="protein sequence ID" value="CAL08095.1"/>
    <property type="molecule type" value="Genomic_DNA"/>
</dbReference>
<dbReference type="RefSeq" id="WP_003019799.1">
    <property type="nucleotide sequence ID" value="NC_008245.1"/>
</dbReference>
<dbReference type="SMR" id="Q14JZ1"/>
<dbReference type="KEGG" id="ftf:FTF0079"/>
<dbReference type="HOGENOM" id="CLU_016950_7_0_6"/>
<dbReference type="GO" id="GO:0005829">
    <property type="term" value="C:cytosol"/>
    <property type="evidence" value="ECO:0007669"/>
    <property type="project" value="TreeGrafter"/>
</dbReference>
<dbReference type="GO" id="GO:0000287">
    <property type="term" value="F:magnesium ion binding"/>
    <property type="evidence" value="ECO:0007669"/>
    <property type="project" value="UniProtKB-UniRule"/>
</dbReference>
<dbReference type="GO" id="GO:0008966">
    <property type="term" value="F:phosphoglucosamine mutase activity"/>
    <property type="evidence" value="ECO:0007669"/>
    <property type="project" value="UniProtKB-UniRule"/>
</dbReference>
<dbReference type="GO" id="GO:0004615">
    <property type="term" value="F:phosphomannomutase activity"/>
    <property type="evidence" value="ECO:0007669"/>
    <property type="project" value="TreeGrafter"/>
</dbReference>
<dbReference type="GO" id="GO:0005975">
    <property type="term" value="P:carbohydrate metabolic process"/>
    <property type="evidence" value="ECO:0007669"/>
    <property type="project" value="InterPro"/>
</dbReference>
<dbReference type="GO" id="GO:0009252">
    <property type="term" value="P:peptidoglycan biosynthetic process"/>
    <property type="evidence" value="ECO:0007669"/>
    <property type="project" value="TreeGrafter"/>
</dbReference>
<dbReference type="GO" id="GO:0006048">
    <property type="term" value="P:UDP-N-acetylglucosamine biosynthetic process"/>
    <property type="evidence" value="ECO:0007669"/>
    <property type="project" value="TreeGrafter"/>
</dbReference>
<dbReference type="CDD" id="cd05802">
    <property type="entry name" value="GlmM"/>
    <property type="match status" value="1"/>
</dbReference>
<dbReference type="FunFam" id="3.30.310.50:FF:000001">
    <property type="entry name" value="Phosphoglucosamine mutase"/>
    <property type="match status" value="1"/>
</dbReference>
<dbReference type="FunFam" id="3.40.120.10:FF:000001">
    <property type="entry name" value="Phosphoglucosamine mutase"/>
    <property type="match status" value="1"/>
</dbReference>
<dbReference type="FunFam" id="3.40.120.10:FF:000003">
    <property type="entry name" value="Phosphoglucosamine mutase"/>
    <property type="match status" value="1"/>
</dbReference>
<dbReference type="Gene3D" id="3.40.120.10">
    <property type="entry name" value="Alpha-D-Glucose-1,6-Bisphosphate, subunit A, domain 3"/>
    <property type="match status" value="3"/>
</dbReference>
<dbReference type="Gene3D" id="3.30.310.50">
    <property type="entry name" value="Alpha-D-phosphohexomutase, C-terminal domain"/>
    <property type="match status" value="1"/>
</dbReference>
<dbReference type="HAMAP" id="MF_01554_B">
    <property type="entry name" value="GlmM_B"/>
    <property type="match status" value="1"/>
</dbReference>
<dbReference type="InterPro" id="IPR005844">
    <property type="entry name" value="A-D-PHexomutase_a/b/a-I"/>
</dbReference>
<dbReference type="InterPro" id="IPR016055">
    <property type="entry name" value="A-D-PHexomutase_a/b/a-I/II/III"/>
</dbReference>
<dbReference type="InterPro" id="IPR005845">
    <property type="entry name" value="A-D-PHexomutase_a/b/a-II"/>
</dbReference>
<dbReference type="InterPro" id="IPR005846">
    <property type="entry name" value="A-D-PHexomutase_a/b/a-III"/>
</dbReference>
<dbReference type="InterPro" id="IPR005843">
    <property type="entry name" value="A-D-PHexomutase_C"/>
</dbReference>
<dbReference type="InterPro" id="IPR036900">
    <property type="entry name" value="A-D-PHexomutase_C_sf"/>
</dbReference>
<dbReference type="InterPro" id="IPR005841">
    <property type="entry name" value="Alpha-D-phosphohexomutase_SF"/>
</dbReference>
<dbReference type="InterPro" id="IPR006352">
    <property type="entry name" value="GlmM_bact"/>
</dbReference>
<dbReference type="InterPro" id="IPR050060">
    <property type="entry name" value="Phosphoglucosamine_mutase"/>
</dbReference>
<dbReference type="NCBIfam" id="TIGR01455">
    <property type="entry name" value="glmM"/>
    <property type="match status" value="1"/>
</dbReference>
<dbReference type="NCBIfam" id="NF008139">
    <property type="entry name" value="PRK10887.1"/>
    <property type="match status" value="1"/>
</dbReference>
<dbReference type="PANTHER" id="PTHR42946:SF1">
    <property type="entry name" value="PHOSPHOGLUCOMUTASE (ALPHA-D-GLUCOSE-1,6-BISPHOSPHATE-DEPENDENT)"/>
    <property type="match status" value="1"/>
</dbReference>
<dbReference type="PANTHER" id="PTHR42946">
    <property type="entry name" value="PHOSPHOHEXOSE MUTASE"/>
    <property type="match status" value="1"/>
</dbReference>
<dbReference type="Pfam" id="PF02878">
    <property type="entry name" value="PGM_PMM_I"/>
    <property type="match status" value="1"/>
</dbReference>
<dbReference type="Pfam" id="PF02879">
    <property type="entry name" value="PGM_PMM_II"/>
    <property type="match status" value="1"/>
</dbReference>
<dbReference type="Pfam" id="PF02880">
    <property type="entry name" value="PGM_PMM_III"/>
    <property type="match status" value="1"/>
</dbReference>
<dbReference type="Pfam" id="PF00408">
    <property type="entry name" value="PGM_PMM_IV"/>
    <property type="match status" value="1"/>
</dbReference>
<dbReference type="PRINTS" id="PR00509">
    <property type="entry name" value="PGMPMM"/>
</dbReference>
<dbReference type="SUPFAM" id="SSF55957">
    <property type="entry name" value="Phosphoglucomutase, C-terminal domain"/>
    <property type="match status" value="1"/>
</dbReference>
<dbReference type="SUPFAM" id="SSF53738">
    <property type="entry name" value="Phosphoglucomutase, first 3 domains"/>
    <property type="match status" value="3"/>
</dbReference>
<sequence>MAKYFGTDGIRGEVANSTITVEFTQKLGNAVGSLINQKNYPKFVIVGQDTRSSGGFLKFALVSGLNAAGIDVLDLGVVPTPVVAFMTVKHRAAAGFVITASHNKFTDNGIKLFSSNGFKLDDALEEEVEDMIDGDFIYQPQFKFGSYKILANAIDEYIESIYSRFAKFVNYKGKVVVDCAHGAASHNFEALLDKFGINYVSIASNPDGLNINVGCGATCVSNIKKAVKEQKADLGISLDGDADRIIIVDENGQEIDGDGILNILAQYSDICGGTNGIVGTQMTNMSYENHYRANKIPFIRSKVGDRYVLEDLVKYGYKIGGESSGHVINLNFGTTGDGLFTAIQLLAIFSQADKPVSEFKLQGELMQQTLINVPLTKKVAREDLQKVASDVNDVEKRLGNRGRVLLRPSGTEPVLRVMVEADDKSLATNEAEYLVEKVKQKLV</sequence>
<reference key="1">
    <citation type="journal article" date="2007" name="PLoS ONE">
        <title>Genome sequencing shows that European isolates of Francisella tularensis subspecies tularensis are almost identical to US laboratory strain Schu S4.</title>
        <authorList>
            <person name="Chaudhuri R.R."/>
            <person name="Ren C.-P."/>
            <person name="Desmond L."/>
            <person name="Vincent G.A."/>
            <person name="Silman N.J."/>
            <person name="Brehm J.K."/>
            <person name="Elmore M.J."/>
            <person name="Hudson M.J."/>
            <person name="Forsman M."/>
            <person name="Isherwood K.E."/>
            <person name="Gurycova D."/>
            <person name="Minton N.P."/>
            <person name="Titball R.W."/>
            <person name="Pallen M.J."/>
            <person name="Vipond R."/>
        </authorList>
    </citation>
    <scope>NUCLEOTIDE SEQUENCE [LARGE SCALE GENOMIC DNA]</scope>
    <source>
        <strain>FSC 198</strain>
    </source>
</reference>
<protein>
    <recommendedName>
        <fullName evidence="1">Phosphoglucosamine mutase</fullName>
        <ecNumber evidence="1">5.4.2.10</ecNumber>
    </recommendedName>
</protein>
<keyword id="KW-0413">Isomerase</keyword>
<keyword id="KW-0460">Magnesium</keyword>
<keyword id="KW-0479">Metal-binding</keyword>
<keyword id="KW-0597">Phosphoprotein</keyword>
<accession>Q14JZ1</accession>
<organism>
    <name type="scientific">Francisella tularensis subsp. tularensis (strain FSC 198)</name>
    <dbReference type="NCBI Taxonomy" id="393115"/>
    <lineage>
        <taxon>Bacteria</taxon>
        <taxon>Pseudomonadati</taxon>
        <taxon>Pseudomonadota</taxon>
        <taxon>Gammaproteobacteria</taxon>
        <taxon>Thiotrichales</taxon>
        <taxon>Francisellaceae</taxon>
        <taxon>Francisella</taxon>
    </lineage>
</organism>
<comment type="function">
    <text evidence="1">Catalyzes the conversion of glucosamine-6-phosphate to glucosamine-1-phosphate.</text>
</comment>
<comment type="catalytic activity">
    <reaction evidence="1">
        <text>alpha-D-glucosamine 1-phosphate = D-glucosamine 6-phosphate</text>
        <dbReference type="Rhea" id="RHEA:23424"/>
        <dbReference type="ChEBI" id="CHEBI:58516"/>
        <dbReference type="ChEBI" id="CHEBI:58725"/>
        <dbReference type="EC" id="5.4.2.10"/>
    </reaction>
</comment>
<comment type="cofactor">
    <cofactor evidence="1">
        <name>Mg(2+)</name>
        <dbReference type="ChEBI" id="CHEBI:18420"/>
    </cofactor>
    <text evidence="1">Binds 1 Mg(2+) ion per subunit.</text>
</comment>
<comment type="PTM">
    <text evidence="1">Activated by phosphorylation.</text>
</comment>
<comment type="similarity">
    <text evidence="1">Belongs to the phosphohexose mutase family.</text>
</comment>
<evidence type="ECO:0000255" key="1">
    <source>
        <dbReference type="HAMAP-Rule" id="MF_01554"/>
    </source>
</evidence>
<proteinExistence type="inferred from homology"/>
<feature type="chain" id="PRO_0000301316" description="Phosphoglucosamine mutase">
    <location>
        <begin position="1"/>
        <end position="443"/>
    </location>
</feature>
<feature type="active site" description="Phosphoserine intermediate" evidence="1">
    <location>
        <position position="101"/>
    </location>
</feature>
<feature type="binding site" description="via phosphate group" evidence="1">
    <location>
        <position position="101"/>
    </location>
    <ligand>
        <name>Mg(2+)</name>
        <dbReference type="ChEBI" id="CHEBI:18420"/>
    </ligand>
</feature>
<feature type="binding site" evidence="1">
    <location>
        <position position="239"/>
    </location>
    <ligand>
        <name>Mg(2+)</name>
        <dbReference type="ChEBI" id="CHEBI:18420"/>
    </ligand>
</feature>
<feature type="binding site" evidence="1">
    <location>
        <position position="241"/>
    </location>
    <ligand>
        <name>Mg(2+)</name>
        <dbReference type="ChEBI" id="CHEBI:18420"/>
    </ligand>
</feature>
<feature type="binding site" evidence="1">
    <location>
        <position position="243"/>
    </location>
    <ligand>
        <name>Mg(2+)</name>
        <dbReference type="ChEBI" id="CHEBI:18420"/>
    </ligand>
</feature>
<feature type="modified residue" description="Phosphoserine" evidence="1">
    <location>
        <position position="101"/>
    </location>
</feature>
<gene>
    <name evidence="1" type="primary">glmM</name>
    <name type="ordered locus">FTF0079</name>
</gene>